<reference key="1">
    <citation type="journal article" date="1997" name="J. Biol. Chem.">
        <title>A novel Go-mediated phototransduction cascade in scallop visual cells.</title>
        <authorList>
            <person name="Kojima D."/>
            <person name="Terakita A."/>
            <person name="Ishikawa T."/>
            <person name="Tsukahara Y."/>
            <person name="Maeda A."/>
            <person name="Shichida Y."/>
        </authorList>
    </citation>
    <scope>NUCLEOTIDE SEQUENCE [MRNA]</scope>
    <source>
        <tissue>Eye</tissue>
    </source>
</reference>
<dbReference type="EMBL" id="AB006454">
    <property type="protein sequence ID" value="BAA22217.1"/>
    <property type="molecule type" value="mRNA"/>
</dbReference>
<dbReference type="SMR" id="O15973"/>
<dbReference type="GlyCosmos" id="O15973">
    <property type="glycosylation" value="3 sites, No reported glycans"/>
</dbReference>
<dbReference type="OrthoDB" id="9996086at2759"/>
<dbReference type="GO" id="GO:0005886">
    <property type="term" value="C:plasma membrane"/>
    <property type="evidence" value="ECO:0000250"/>
    <property type="project" value="UniProtKB"/>
</dbReference>
<dbReference type="GO" id="GO:0004930">
    <property type="term" value="F:G protein-coupled receptor activity"/>
    <property type="evidence" value="ECO:0007669"/>
    <property type="project" value="UniProtKB-KW"/>
</dbReference>
<dbReference type="GO" id="GO:0009881">
    <property type="term" value="F:photoreceptor activity"/>
    <property type="evidence" value="ECO:0007669"/>
    <property type="project" value="UniProtKB-KW"/>
</dbReference>
<dbReference type="GO" id="GO:0007602">
    <property type="term" value="P:phototransduction"/>
    <property type="evidence" value="ECO:0007669"/>
    <property type="project" value="UniProtKB-KW"/>
</dbReference>
<dbReference type="GO" id="GO:0007601">
    <property type="term" value="P:visual perception"/>
    <property type="evidence" value="ECO:0007669"/>
    <property type="project" value="UniProtKB-KW"/>
</dbReference>
<dbReference type="CDD" id="cd15337">
    <property type="entry name" value="7tmA_Opsin_Gq_invertebrates"/>
    <property type="match status" value="1"/>
</dbReference>
<dbReference type="FunFam" id="1.20.1070.10:FF:000044">
    <property type="entry name" value="Opsin, ultraviolet-sensitive"/>
    <property type="match status" value="1"/>
</dbReference>
<dbReference type="Gene3D" id="1.20.1070.10">
    <property type="entry name" value="Rhodopsin 7-helix transmembrane proteins"/>
    <property type="match status" value="1"/>
</dbReference>
<dbReference type="InterPro" id="IPR050125">
    <property type="entry name" value="GPCR_opsins"/>
</dbReference>
<dbReference type="InterPro" id="IPR000276">
    <property type="entry name" value="GPCR_Rhodpsn"/>
</dbReference>
<dbReference type="InterPro" id="IPR017452">
    <property type="entry name" value="GPCR_Rhodpsn_7TM"/>
</dbReference>
<dbReference type="InterPro" id="IPR001760">
    <property type="entry name" value="Opsin"/>
</dbReference>
<dbReference type="InterPro" id="IPR027430">
    <property type="entry name" value="Retinal_BS"/>
</dbReference>
<dbReference type="PANTHER" id="PTHR24240">
    <property type="entry name" value="OPSIN"/>
    <property type="match status" value="1"/>
</dbReference>
<dbReference type="Pfam" id="PF00001">
    <property type="entry name" value="7tm_1"/>
    <property type="match status" value="1"/>
</dbReference>
<dbReference type="PRINTS" id="PR00237">
    <property type="entry name" value="GPCRRHODOPSN"/>
</dbReference>
<dbReference type="PRINTS" id="PR00238">
    <property type="entry name" value="OPSIN"/>
</dbReference>
<dbReference type="PRINTS" id="PR00577">
    <property type="entry name" value="OPSINRH3RH4"/>
</dbReference>
<dbReference type="SMART" id="SM01381">
    <property type="entry name" value="7TM_GPCR_Srsx"/>
    <property type="match status" value="1"/>
</dbReference>
<dbReference type="SUPFAM" id="SSF81321">
    <property type="entry name" value="Family A G protein-coupled receptor-like"/>
    <property type="match status" value="1"/>
</dbReference>
<dbReference type="PROSITE" id="PS00237">
    <property type="entry name" value="G_PROTEIN_RECEP_F1_1"/>
    <property type="match status" value="1"/>
</dbReference>
<dbReference type="PROSITE" id="PS50262">
    <property type="entry name" value="G_PROTEIN_RECEP_F1_2"/>
    <property type="match status" value="1"/>
</dbReference>
<dbReference type="PROSITE" id="PS00238">
    <property type="entry name" value="OPSIN"/>
    <property type="match status" value="1"/>
</dbReference>
<sequence>MADNKSTLPGLPDINGTLNRSMTPNTGWEGPYDMSVHLHWTQFPPVTEEWHYIIGVYITIVGLLGIMGNTTVVYIFSNTKSLRSPSNLFVVNLAVSDLIFSAVNGFPLLTVSSFHQKWIFGSLFCQLYGFVGGVFGLMSINTLTAISIDRYVVITKPLQASQTMTRRKVHLMIVIVWVLSILLSIPPFFGWGAYIPEGFQTSCTFDYLTKTARTRTYIVVLYLFGFLIPLIIIGVCYVLIIRGVRRHDQKMLTITRSMKTEDARANNKRARSELRISKIAMTVTCLFIISWSPYAIIALIAQFGPAHWITPLVSELPMMLAKSSSMHNPVVYALSHPKFRKALYQRVPWLFCCCKPKEKADFRTSVCSKRSVTRTESVNSDVSSVISNLSDSTTTLGLTSEGATRANRETSFRRSVSIIKGDEDPCTHPDTFLLAYKEVEVGNLFDMTDDQNRRDSNLHSLYIPTRVQHRPTTQSLGTTPGGVYIVDNGQRVNGLTFNS</sequence>
<organism>
    <name type="scientific">Mizuhopecten yessoensis</name>
    <name type="common">Japanese scallop</name>
    <name type="synonym">Patinopecten yessoensis</name>
    <dbReference type="NCBI Taxonomy" id="6573"/>
    <lineage>
        <taxon>Eukaryota</taxon>
        <taxon>Metazoa</taxon>
        <taxon>Spiralia</taxon>
        <taxon>Lophotrochozoa</taxon>
        <taxon>Mollusca</taxon>
        <taxon>Bivalvia</taxon>
        <taxon>Autobranchia</taxon>
        <taxon>Pteriomorphia</taxon>
        <taxon>Pectinida</taxon>
        <taxon>Pectinoidea</taxon>
        <taxon>Pectinidae</taxon>
        <taxon>Mizuhopecten</taxon>
    </lineage>
</organism>
<comment type="function">
    <text>Visual pigments such as rhodopsin and porphyropsin are light-absorbing molecules that mediate vision. Rhodopsin consists of an apoprotein, opsin, covalently linked to 11-cis-retinal. This receptor is coupled to the activation of phospholipase C. Porphyropsin consists of opsin covalently linked to 11-cis 3,4-didehydroretinal.</text>
</comment>
<comment type="subcellular location">
    <subcellularLocation>
        <location>Membrane</location>
        <topology>Multi-pass membrane protein</topology>
    </subcellularLocation>
</comment>
<comment type="tissue specificity">
    <text>Retina. Expressed in the depolarizing cell layer of the photoreceptor cells distant from the lens.</text>
</comment>
<comment type="PTM">
    <text evidence="1">Phosphorylated on some or all of the serine and threonine residues present in the C-terminal region.</text>
</comment>
<comment type="similarity">
    <text evidence="3">Belongs to the G-protein coupled receptor 1 family. Opsin subfamily.</text>
</comment>
<proteinExistence type="evidence at protein level"/>
<evidence type="ECO:0000250" key="1"/>
<evidence type="ECO:0000255" key="2"/>
<evidence type="ECO:0000255" key="3">
    <source>
        <dbReference type="PROSITE-ProRule" id="PRU00521"/>
    </source>
</evidence>
<accession>O15973</accession>
<feature type="chain" id="PRO_0000197735" description="Rhodopsin, GQ-coupled">
    <location>
        <begin position="1"/>
        <end position="499"/>
    </location>
</feature>
<feature type="topological domain" description="Extracellular">
    <location>
        <begin position="1"/>
        <end position="50"/>
    </location>
</feature>
<feature type="transmembrane region" description="Helical; Name=1" evidence="2">
    <location>
        <begin position="51"/>
        <end position="75"/>
    </location>
</feature>
<feature type="topological domain" description="Cytoplasmic">
    <location>
        <begin position="76"/>
        <end position="87"/>
    </location>
</feature>
<feature type="transmembrane region" description="Helical; Name=2" evidence="2">
    <location>
        <begin position="88"/>
        <end position="114"/>
    </location>
</feature>
<feature type="topological domain" description="Extracellular">
    <location>
        <begin position="115"/>
        <end position="128"/>
    </location>
</feature>
<feature type="transmembrane region" description="Helical; Name=3" evidence="2">
    <location>
        <begin position="129"/>
        <end position="148"/>
    </location>
</feature>
<feature type="topological domain" description="Cytoplasmic">
    <location>
        <begin position="149"/>
        <end position="168"/>
    </location>
</feature>
<feature type="transmembrane region" description="Helical; Name=4" evidence="2">
    <location>
        <begin position="169"/>
        <end position="192"/>
    </location>
</feature>
<feature type="topological domain" description="Extracellular">
    <location>
        <begin position="193"/>
        <end position="216"/>
    </location>
</feature>
<feature type="transmembrane region" description="Helical; Name=5" evidence="2">
    <location>
        <begin position="217"/>
        <end position="244"/>
    </location>
</feature>
<feature type="topological domain" description="Cytoplasmic">
    <location>
        <begin position="245"/>
        <end position="278"/>
    </location>
</feature>
<feature type="transmembrane region" description="Helical; Name=6" evidence="2">
    <location>
        <begin position="279"/>
        <end position="302"/>
    </location>
</feature>
<feature type="topological domain" description="Extracellular">
    <location>
        <begin position="303"/>
        <end position="310"/>
    </location>
</feature>
<feature type="transmembrane region" description="Helical; Name=7" evidence="2">
    <location>
        <begin position="311"/>
        <end position="335"/>
    </location>
</feature>
<feature type="topological domain" description="Cytoplasmic">
    <location>
        <begin position="336"/>
        <end position="499"/>
    </location>
</feature>
<feature type="modified residue" description="N6-(retinylidene)lysine">
    <location>
        <position position="322"/>
    </location>
</feature>
<feature type="lipid moiety-binding region" description="S-palmitoyl cysteine" evidence="1">
    <location>
        <position position="353"/>
    </location>
</feature>
<feature type="lipid moiety-binding region" description="S-palmitoyl cysteine" evidence="1">
    <location>
        <position position="354"/>
    </location>
</feature>
<feature type="glycosylation site" description="N-linked (GlcNAc...) asparagine" evidence="2">
    <location>
        <position position="4"/>
    </location>
</feature>
<feature type="glycosylation site" description="N-linked (GlcNAc...) asparagine" evidence="2">
    <location>
        <position position="15"/>
    </location>
</feature>
<feature type="glycosylation site" description="N-linked (GlcNAc...) asparagine" evidence="2">
    <location>
        <position position="19"/>
    </location>
</feature>
<feature type="disulfide bond" evidence="3">
    <location>
        <begin position="125"/>
        <end position="203"/>
    </location>
</feature>
<gene>
    <name type="primary">SCOP1</name>
</gene>
<keyword id="KW-0157">Chromophore</keyword>
<keyword id="KW-1015">Disulfide bond</keyword>
<keyword id="KW-0297">G-protein coupled receptor</keyword>
<keyword id="KW-0325">Glycoprotein</keyword>
<keyword id="KW-0449">Lipoprotein</keyword>
<keyword id="KW-0472">Membrane</keyword>
<keyword id="KW-0564">Palmitate</keyword>
<keyword id="KW-0597">Phosphoprotein</keyword>
<keyword id="KW-0600">Photoreceptor protein</keyword>
<keyword id="KW-0675">Receptor</keyword>
<keyword id="KW-0681">Retinal protein</keyword>
<keyword id="KW-0716">Sensory transduction</keyword>
<keyword id="KW-0807">Transducer</keyword>
<keyword id="KW-0812">Transmembrane</keyword>
<keyword id="KW-1133">Transmembrane helix</keyword>
<keyword id="KW-0844">Vision</keyword>
<protein>
    <recommendedName>
        <fullName>Rhodopsin, GQ-coupled</fullName>
    </recommendedName>
    <alternativeName>
        <fullName>GQ-rhodopsin</fullName>
    </alternativeName>
</protein>
<name>OPSD1_MIZYE</name>